<dbReference type="EMBL" id="CP001095">
    <property type="protein sequence ID" value="ACJ52151.1"/>
    <property type="molecule type" value="Genomic_DNA"/>
</dbReference>
<dbReference type="EMBL" id="AP010889">
    <property type="protein sequence ID" value="BAJ68671.1"/>
    <property type="molecule type" value="Genomic_DNA"/>
</dbReference>
<dbReference type="RefSeq" id="WP_012577411.1">
    <property type="nucleotide sequence ID" value="NZ_JDTT01000016.1"/>
</dbReference>
<dbReference type="SMR" id="B7GQS1"/>
<dbReference type="KEGG" id="bln:Blon_1059"/>
<dbReference type="KEGG" id="blon:BLIJ_1083"/>
<dbReference type="PATRIC" id="fig|391904.8.peg.1080"/>
<dbReference type="HOGENOM" id="CLU_073981_2_0_11"/>
<dbReference type="Proteomes" id="UP000001360">
    <property type="component" value="Chromosome"/>
</dbReference>
<dbReference type="GO" id="GO:0005737">
    <property type="term" value="C:cytoplasm"/>
    <property type="evidence" value="ECO:0007669"/>
    <property type="project" value="UniProtKB-SubCell"/>
</dbReference>
<dbReference type="GO" id="GO:0043023">
    <property type="term" value="F:ribosomal large subunit binding"/>
    <property type="evidence" value="ECO:0007669"/>
    <property type="project" value="TreeGrafter"/>
</dbReference>
<dbReference type="GO" id="GO:0006415">
    <property type="term" value="P:translational termination"/>
    <property type="evidence" value="ECO:0007669"/>
    <property type="project" value="UniProtKB-UniRule"/>
</dbReference>
<dbReference type="CDD" id="cd00520">
    <property type="entry name" value="RRF"/>
    <property type="match status" value="1"/>
</dbReference>
<dbReference type="FunFam" id="1.10.132.20:FF:000001">
    <property type="entry name" value="Ribosome-recycling factor"/>
    <property type="match status" value="1"/>
</dbReference>
<dbReference type="FunFam" id="3.30.1360.40:FF:000001">
    <property type="entry name" value="Ribosome-recycling factor"/>
    <property type="match status" value="1"/>
</dbReference>
<dbReference type="Gene3D" id="3.30.1360.40">
    <property type="match status" value="1"/>
</dbReference>
<dbReference type="Gene3D" id="1.10.132.20">
    <property type="entry name" value="Ribosome-recycling factor"/>
    <property type="match status" value="1"/>
</dbReference>
<dbReference type="HAMAP" id="MF_00040">
    <property type="entry name" value="RRF"/>
    <property type="match status" value="1"/>
</dbReference>
<dbReference type="InterPro" id="IPR002661">
    <property type="entry name" value="Ribosome_recyc_fac"/>
</dbReference>
<dbReference type="InterPro" id="IPR023584">
    <property type="entry name" value="Ribosome_recyc_fac_dom"/>
</dbReference>
<dbReference type="InterPro" id="IPR036191">
    <property type="entry name" value="RRF_sf"/>
</dbReference>
<dbReference type="NCBIfam" id="TIGR00496">
    <property type="entry name" value="frr"/>
    <property type="match status" value="1"/>
</dbReference>
<dbReference type="PANTHER" id="PTHR20982:SF3">
    <property type="entry name" value="MITOCHONDRIAL RIBOSOME RECYCLING FACTOR PSEUDO 1"/>
    <property type="match status" value="1"/>
</dbReference>
<dbReference type="PANTHER" id="PTHR20982">
    <property type="entry name" value="RIBOSOME RECYCLING FACTOR"/>
    <property type="match status" value="1"/>
</dbReference>
<dbReference type="Pfam" id="PF01765">
    <property type="entry name" value="RRF"/>
    <property type="match status" value="1"/>
</dbReference>
<dbReference type="SUPFAM" id="SSF55194">
    <property type="entry name" value="Ribosome recycling factor, RRF"/>
    <property type="match status" value="1"/>
</dbReference>
<accession>B7GQS1</accession>
<accession>E8MJE4</accession>
<sequence length="183" mass="20083">MSLIDQAREQMAKTVENTKENFSGIRTGRANPALLNGITVDYYGAPTPIKAVASIGVPEPRTLSVTPFDASQAGAVEKALRNSDLGVSPNRDGNVIRLTMPELTEERRKEYVKLAKGKAEDGKVAVRNIRRKTKEALDKAVKDGEMGEDEGDRLLKDLDKVTKSVTDEIDALLESKQKEIMEV</sequence>
<name>RRF_BIFLS</name>
<protein>
    <recommendedName>
        <fullName evidence="1">Ribosome-recycling factor</fullName>
        <shortName evidence="1">RRF</shortName>
    </recommendedName>
    <alternativeName>
        <fullName evidence="1">Ribosome-releasing factor</fullName>
    </alternativeName>
</protein>
<keyword id="KW-0963">Cytoplasm</keyword>
<keyword id="KW-0648">Protein biosynthesis</keyword>
<reference key="1">
    <citation type="journal article" date="2008" name="Proc. Natl. Acad. Sci. U.S.A.">
        <title>The genome sequence of Bifidobacterium longum subsp. infantis reveals adaptations for milk utilization within the infant microbiome.</title>
        <authorList>
            <person name="Sela D.A."/>
            <person name="Chapman J."/>
            <person name="Adeuya A."/>
            <person name="Kim J.H."/>
            <person name="Chen F."/>
            <person name="Whitehead T.R."/>
            <person name="Lapidus A."/>
            <person name="Rokhsar D.S."/>
            <person name="Lebrilla C.B."/>
            <person name="German J.B."/>
            <person name="Price N.P."/>
            <person name="Richardson P.M."/>
            <person name="Mills D.A."/>
        </authorList>
    </citation>
    <scope>NUCLEOTIDE SEQUENCE [LARGE SCALE GENOMIC DNA]</scope>
    <source>
        <strain>ATCC 15697 / DSM 20088 / JCM 1222 / NCTC 11817 / S12</strain>
    </source>
</reference>
<reference key="2">
    <citation type="journal article" date="2011" name="Nature">
        <title>Bifidobacteria can protect from enteropathogenic infection through production of acetate.</title>
        <authorList>
            <person name="Fukuda S."/>
            <person name="Toh H."/>
            <person name="Hase K."/>
            <person name="Oshima K."/>
            <person name="Nakanishi Y."/>
            <person name="Yoshimura K."/>
            <person name="Tobe T."/>
            <person name="Clarke J.M."/>
            <person name="Topping D.L."/>
            <person name="Suzuki T."/>
            <person name="Taylor T.D."/>
            <person name="Itoh K."/>
            <person name="Kikuchi J."/>
            <person name="Morita H."/>
            <person name="Hattori M."/>
            <person name="Ohno H."/>
        </authorList>
    </citation>
    <scope>NUCLEOTIDE SEQUENCE [LARGE SCALE GENOMIC DNA]</scope>
    <source>
        <strain>ATCC 15697 / DSM 20088 / JCM 1222 / NCTC 11817 / S12</strain>
    </source>
</reference>
<proteinExistence type="inferred from homology"/>
<comment type="function">
    <text evidence="1">Responsible for the release of ribosomes from messenger RNA at the termination of protein biosynthesis. May increase the efficiency of translation by recycling ribosomes from one round of translation to another.</text>
</comment>
<comment type="subcellular location">
    <subcellularLocation>
        <location evidence="1">Cytoplasm</location>
    </subcellularLocation>
</comment>
<comment type="similarity">
    <text evidence="1">Belongs to the RRF family.</text>
</comment>
<evidence type="ECO:0000255" key="1">
    <source>
        <dbReference type="HAMAP-Rule" id="MF_00040"/>
    </source>
</evidence>
<organism>
    <name type="scientific">Bifidobacterium longum subsp. infantis (strain ATCC 15697 / DSM 20088 / JCM 1222 / NCTC 11817 / S12)</name>
    <dbReference type="NCBI Taxonomy" id="391904"/>
    <lineage>
        <taxon>Bacteria</taxon>
        <taxon>Bacillati</taxon>
        <taxon>Actinomycetota</taxon>
        <taxon>Actinomycetes</taxon>
        <taxon>Bifidobacteriales</taxon>
        <taxon>Bifidobacteriaceae</taxon>
        <taxon>Bifidobacterium</taxon>
    </lineage>
</organism>
<gene>
    <name evidence="1" type="primary">frr</name>
    <name type="ordered locus">Blon_1059</name>
    <name type="ordered locus">BLIJ_1083</name>
</gene>
<feature type="chain" id="PRO_1000194901" description="Ribosome-recycling factor">
    <location>
        <begin position="1"/>
        <end position="183"/>
    </location>
</feature>